<accession>A6Q6K6</accession>
<comment type="function">
    <text evidence="1">Involved in the de novo purine biosynthesis. Catalyzes the transfer of formate to 5-phospho-ribosyl-glycinamide (GAR), producing 5-phospho-ribosyl-N-formylglycinamide (FGAR). Formate is provided by PurU via hydrolysis of 10-formyl-tetrahydrofolate.</text>
</comment>
<comment type="catalytic activity">
    <reaction evidence="1">
        <text>N(1)-(5-phospho-beta-D-ribosyl)glycinamide + formate + ATP = N(2)-formyl-N(1)-(5-phospho-beta-D-ribosyl)glycinamide + ADP + phosphate + H(+)</text>
        <dbReference type="Rhea" id="RHEA:24829"/>
        <dbReference type="ChEBI" id="CHEBI:15378"/>
        <dbReference type="ChEBI" id="CHEBI:15740"/>
        <dbReference type="ChEBI" id="CHEBI:30616"/>
        <dbReference type="ChEBI" id="CHEBI:43474"/>
        <dbReference type="ChEBI" id="CHEBI:143788"/>
        <dbReference type="ChEBI" id="CHEBI:147286"/>
        <dbReference type="ChEBI" id="CHEBI:456216"/>
        <dbReference type="EC" id="6.3.1.21"/>
    </reaction>
    <physiologicalReaction direction="left-to-right" evidence="1">
        <dbReference type="Rhea" id="RHEA:24830"/>
    </physiologicalReaction>
</comment>
<comment type="pathway">
    <text evidence="1">Purine metabolism; IMP biosynthesis via de novo pathway; N(2)-formyl-N(1)-(5-phospho-D-ribosyl)glycinamide from N(1)-(5-phospho-D-ribosyl)glycinamide (formate route): step 1/1.</text>
</comment>
<comment type="subunit">
    <text evidence="1">Homodimer.</text>
</comment>
<comment type="similarity">
    <text evidence="1">Belongs to the PurK/PurT family.</text>
</comment>
<name>PURT_SULNB</name>
<protein>
    <recommendedName>
        <fullName evidence="1">Formate-dependent phosphoribosylglycinamide formyltransferase</fullName>
        <ecNumber evidence="1">6.3.1.21</ecNumber>
    </recommendedName>
    <alternativeName>
        <fullName evidence="1">5'-phosphoribosylglycinamide transformylase 2</fullName>
    </alternativeName>
    <alternativeName>
        <fullName evidence="1">Formate-dependent GAR transformylase</fullName>
    </alternativeName>
    <alternativeName>
        <fullName evidence="1">GAR transformylase 2</fullName>
        <shortName evidence="1">GART 2</shortName>
    </alternativeName>
    <alternativeName>
        <fullName evidence="1">Non-folate glycinamide ribonucleotide transformylase</fullName>
    </alternativeName>
    <alternativeName>
        <fullName evidence="1">Phosphoribosylglycinamide formyltransferase 2</fullName>
    </alternativeName>
</protein>
<organism>
    <name type="scientific">Sulfurovum sp. (strain NBC37-1)</name>
    <dbReference type="NCBI Taxonomy" id="387093"/>
    <lineage>
        <taxon>Bacteria</taxon>
        <taxon>Pseudomonadati</taxon>
        <taxon>Campylobacterota</taxon>
        <taxon>Epsilonproteobacteria</taxon>
        <taxon>Campylobacterales</taxon>
        <taxon>Sulfurovaceae</taxon>
        <taxon>Sulfurovum</taxon>
    </lineage>
</organism>
<keyword id="KW-0067">ATP-binding</keyword>
<keyword id="KW-0436">Ligase</keyword>
<keyword id="KW-0460">Magnesium</keyword>
<keyword id="KW-0479">Metal-binding</keyword>
<keyword id="KW-0547">Nucleotide-binding</keyword>
<keyword id="KW-0658">Purine biosynthesis</keyword>
<gene>
    <name evidence="1" type="primary">purT</name>
    <name type="ordered locus">SUN_0155</name>
</gene>
<dbReference type="EC" id="6.3.1.21" evidence="1"/>
<dbReference type="EMBL" id="AP009179">
    <property type="protein sequence ID" value="BAF71115.1"/>
    <property type="molecule type" value="Genomic_DNA"/>
</dbReference>
<dbReference type="RefSeq" id="WP_011979848.1">
    <property type="nucleotide sequence ID" value="NC_009663.1"/>
</dbReference>
<dbReference type="SMR" id="A6Q6K6"/>
<dbReference type="STRING" id="387093.SUN_0155"/>
<dbReference type="KEGG" id="sun:SUN_0155"/>
<dbReference type="eggNOG" id="COG0027">
    <property type="taxonomic scope" value="Bacteria"/>
</dbReference>
<dbReference type="HOGENOM" id="CLU_011534_1_3_7"/>
<dbReference type="OrthoDB" id="9804625at2"/>
<dbReference type="UniPathway" id="UPA00074">
    <property type="reaction ID" value="UER00127"/>
</dbReference>
<dbReference type="Proteomes" id="UP000006378">
    <property type="component" value="Chromosome"/>
</dbReference>
<dbReference type="GO" id="GO:0005829">
    <property type="term" value="C:cytosol"/>
    <property type="evidence" value="ECO:0007669"/>
    <property type="project" value="TreeGrafter"/>
</dbReference>
<dbReference type="GO" id="GO:0005524">
    <property type="term" value="F:ATP binding"/>
    <property type="evidence" value="ECO:0007669"/>
    <property type="project" value="UniProtKB-UniRule"/>
</dbReference>
<dbReference type="GO" id="GO:0000287">
    <property type="term" value="F:magnesium ion binding"/>
    <property type="evidence" value="ECO:0007669"/>
    <property type="project" value="InterPro"/>
</dbReference>
<dbReference type="GO" id="GO:0043815">
    <property type="term" value="F:phosphoribosylglycinamide formyltransferase 2 activity"/>
    <property type="evidence" value="ECO:0007669"/>
    <property type="project" value="UniProtKB-UniRule"/>
</dbReference>
<dbReference type="GO" id="GO:0004644">
    <property type="term" value="F:phosphoribosylglycinamide formyltransferase activity"/>
    <property type="evidence" value="ECO:0007669"/>
    <property type="project" value="InterPro"/>
</dbReference>
<dbReference type="GO" id="GO:0006189">
    <property type="term" value="P:'de novo' IMP biosynthetic process"/>
    <property type="evidence" value="ECO:0007669"/>
    <property type="project" value="UniProtKB-UniRule"/>
</dbReference>
<dbReference type="Gene3D" id="3.40.50.20">
    <property type="match status" value="1"/>
</dbReference>
<dbReference type="Gene3D" id="3.30.1490.20">
    <property type="entry name" value="ATP-grasp fold, A domain"/>
    <property type="match status" value="1"/>
</dbReference>
<dbReference type="Gene3D" id="3.30.470.20">
    <property type="entry name" value="ATP-grasp fold, B domain"/>
    <property type="match status" value="1"/>
</dbReference>
<dbReference type="HAMAP" id="MF_01643">
    <property type="entry name" value="PurT"/>
    <property type="match status" value="1"/>
</dbReference>
<dbReference type="InterPro" id="IPR011761">
    <property type="entry name" value="ATP-grasp"/>
</dbReference>
<dbReference type="InterPro" id="IPR003135">
    <property type="entry name" value="ATP-grasp_carboxylate-amine"/>
</dbReference>
<dbReference type="InterPro" id="IPR013815">
    <property type="entry name" value="ATP_grasp_subdomain_1"/>
</dbReference>
<dbReference type="InterPro" id="IPR016185">
    <property type="entry name" value="PreATP-grasp_dom_sf"/>
</dbReference>
<dbReference type="InterPro" id="IPR005862">
    <property type="entry name" value="PurT"/>
</dbReference>
<dbReference type="InterPro" id="IPR054350">
    <property type="entry name" value="PurT/PurK_preATP-grasp"/>
</dbReference>
<dbReference type="InterPro" id="IPR048740">
    <property type="entry name" value="PurT_C"/>
</dbReference>
<dbReference type="InterPro" id="IPR011054">
    <property type="entry name" value="Rudment_hybrid_motif"/>
</dbReference>
<dbReference type="NCBIfam" id="NF006766">
    <property type="entry name" value="PRK09288.1"/>
    <property type="match status" value="1"/>
</dbReference>
<dbReference type="NCBIfam" id="TIGR01142">
    <property type="entry name" value="purT"/>
    <property type="match status" value="1"/>
</dbReference>
<dbReference type="PANTHER" id="PTHR43055">
    <property type="entry name" value="FORMATE-DEPENDENT PHOSPHORIBOSYLGLYCINAMIDE FORMYLTRANSFERASE"/>
    <property type="match status" value="1"/>
</dbReference>
<dbReference type="PANTHER" id="PTHR43055:SF1">
    <property type="entry name" value="FORMATE-DEPENDENT PHOSPHORIBOSYLGLYCINAMIDE FORMYLTRANSFERASE"/>
    <property type="match status" value="1"/>
</dbReference>
<dbReference type="Pfam" id="PF02222">
    <property type="entry name" value="ATP-grasp"/>
    <property type="match status" value="1"/>
</dbReference>
<dbReference type="Pfam" id="PF21244">
    <property type="entry name" value="PurT_C"/>
    <property type="match status" value="1"/>
</dbReference>
<dbReference type="Pfam" id="PF22660">
    <property type="entry name" value="RS_preATP-grasp-like"/>
    <property type="match status" value="1"/>
</dbReference>
<dbReference type="SUPFAM" id="SSF56059">
    <property type="entry name" value="Glutathione synthetase ATP-binding domain-like"/>
    <property type="match status" value="1"/>
</dbReference>
<dbReference type="SUPFAM" id="SSF52440">
    <property type="entry name" value="PreATP-grasp domain"/>
    <property type="match status" value="1"/>
</dbReference>
<dbReference type="SUPFAM" id="SSF51246">
    <property type="entry name" value="Rudiment single hybrid motif"/>
    <property type="match status" value="1"/>
</dbReference>
<dbReference type="PROSITE" id="PS50975">
    <property type="entry name" value="ATP_GRASP"/>
    <property type="match status" value="1"/>
</dbReference>
<evidence type="ECO:0000255" key="1">
    <source>
        <dbReference type="HAMAP-Rule" id="MF_01643"/>
    </source>
</evidence>
<reference key="1">
    <citation type="journal article" date="2007" name="Proc. Natl. Acad. Sci. U.S.A.">
        <title>Deep-sea vent epsilon-proteobacterial genomes provide insights into emergence of pathogens.</title>
        <authorList>
            <person name="Nakagawa S."/>
            <person name="Takaki Y."/>
            <person name="Shimamura S."/>
            <person name="Reysenbach A.-L."/>
            <person name="Takai K."/>
            <person name="Horikoshi K."/>
        </authorList>
    </citation>
    <scope>NUCLEOTIDE SEQUENCE [LARGE SCALE GENOMIC DNA]</scope>
    <source>
        <strain>NBC37-1</strain>
    </source>
</reference>
<feature type="chain" id="PRO_0000319244" description="Formate-dependent phosphoribosylglycinamide formyltransferase">
    <location>
        <begin position="1"/>
        <end position="387"/>
    </location>
</feature>
<feature type="domain" description="ATP-grasp" evidence="1">
    <location>
        <begin position="118"/>
        <end position="306"/>
    </location>
</feature>
<feature type="binding site" evidence="1">
    <location>
        <begin position="21"/>
        <end position="22"/>
    </location>
    <ligand>
        <name>N(1)-(5-phospho-beta-D-ribosyl)glycinamide</name>
        <dbReference type="ChEBI" id="CHEBI:143788"/>
    </ligand>
</feature>
<feature type="binding site" evidence="1">
    <location>
        <position position="81"/>
    </location>
    <ligand>
        <name>N(1)-(5-phospho-beta-D-ribosyl)glycinamide</name>
        <dbReference type="ChEBI" id="CHEBI:143788"/>
    </ligand>
</feature>
<feature type="binding site" evidence="1">
    <location>
        <position position="113"/>
    </location>
    <ligand>
        <name>ATP</name>
        <dbReference type="ChEBI" id="CHEBI:30616"/>
    </ligand>
</feature>
<feature type="binding site" evidence="1">
    <location>
        <position position="154"/>
    </location>
    <ligand>
        <name>ATP</name>
        <dbReference type="ChEBI" id="CHEBI:30616"/>
    </ligand>
</feature>
<feature type="binding site" evidence="1">
    <location>
        <begin position="159"/>
        <end position="164"/>
    </location>
    <ligand>
        <name>ATP</name>
        <dbReference type="ChEBI" id="CHEBI:30616"/>
    </ligand>
</feature>
<feature type="binding site" evidence="1">
    <location>
        <begin position="193"/>
        <end position="196"/>
    </location>
    <ligand>
        <name>ATP</name>
        <dbReference type="ChEBI" id="CHEBI:30616"/>
    </ligand>
</feature>
<feature type="binding site" evidence="1">
    <location>
        <position position="201"/>
    </location>
    <ligand>
        <name>ATP</name>
        <dbReference type="ChEBI" id="CHEBI:30616"/>
    </ligand>
</feature>
<feature type="binding site" evidence="1">
    <location>
        <position position="265"/>
    </location>
    <ligand>
        <name>Mg(2+)</name>
        <dbReference type="ChEBI" id="CHEBI:18420"/>
    </ligand>
</feature>
<feature type="binding site" evidence="1">
    <location>
        <position position="277"/>
    </location>
    <ligand>
        <name>Mg(2+)</name>
        <dbReference type="ChEBI" id="CHEBI:18420"/>
    </ligand>
</feature>
<feature type="binding site" evidence="1">
    <location>
        <position position="284"/>
    </location>
    <ligand>
        <name>N(1)-(5-phospho-beta-D-ribosyl)glycinamide</name>
        <dbReference type="ChEBI" id="CHEBI:143788"/>
    </ligand>
</feature>
<feature type="binding site" evidence="1">
    <location>
        <position position="352"/>
    </location>
    <ligand>
        <name>N(1)-(5-phospho-beta-D-ribosyl)glycinamide</name>
        <dbReference type="ChEBI" id="CHEBI:143788"/>
    </ligand>
</feature>
<feature type="binding site" evidence="1">
    <location>
        <begin position="359"/>
        <end position="360"/>
    </location>
    <ligand>
        <name>N(1)-(5-phospho-beta-D-ribosyl)glycinamide</name>
        <dbReference type="ChEBI" id="CHEBI:143788"/>
    </ligand>
</feature>
<sequence length="387" mass="42683">MTFTAPLQKDAIRIMLLGSGELGKEVAIEAQRLGIEVIAVDKYENAPAHLVANRSYAIDMQDKSAVLELIEKEQPSYILPEVEAISISALFEAEKRGFHVIPNAEAVNKTMNRKNIRVFAAETLDLKTSGYEFVTTLDGLKAAGERIGFPCVIKPVMSSSGHGQSIAKTANDIERSWEIAKEARGDASELIVEEFVPFDYEITLLTVRNETGTTFCEPIGHVQKDGDFILSWQPMQMSPEALKKAQEIAKAVTDGLGGRGIFGVEFFVKDEEVYFSELSPRPHDTGMVTLITQSQSEFALHVRAVLGLPLDFTFYGAGACGAYKAKNESHNPVLEIPDDAFTKDSFVRVFGKPESHVGRRMAVSLVLDEVKEAKRRATEIVETIDDH</sequence>
<proteinExistence type="inferred from homology"/>